<sequence length="423" mass="44988">MTNKLIIQGGKKLAGTLQVDGAKNSAVALIPAAILAESEVVLEGLPDISDVYTLYDILEELGGSVRYDNKTAVIDPADMISMPLPTGNVKKLRASYYLMGAMLGRFKKAVIGLPGGCYLGPRPIDQHIKGFEALGAKVTNEQGAIYLRADELKGARIYLDVVSVGATINIMLAAVRAKGKTIIENAAKEPEIIDVATLLSNMGAIIKGAGTDTIRITGVEHLHGCHHTIIPDRIEAGTFMVLAAASGKGVRIENVIPTHLEGIIAKMTEMGIPMDIEEDAIFVGEVEKIKKVDIKTYAYPGFPTDLQQPLTALLTRAEGSSVVTDTIYPSRFKHIAEIERMGGKFKLEGRSAVVSGPVKLQGSKVTATDLRAGAALVIAGLLAEGTTEIHGVEHIERGYSKIIEKLSAIGADITRSTAAETKL</sequence>
<comment type="function">
    <text evidence="1">Cell wall formation. Adds enolpyruvyl to UDP-N-acetylglucosamine.</text>
</comment>
<comment type="catalytic activity">
    <reaction evidence="1">
        <text>phosphoenolpyruvate + UDP-N-acetyl-alpha-D-glucosamine = UDP-N-acetyl-3-O-(1-carboxyvinyl)-alpha-D-glucosamine + phosphate</text>
        <dbReference type="Rhea" id="RHEA:18681"/>
        <dbReference type="ChEBI" id="CHEBI:43474"/>
        <dbReference type="ChEBI" id="CHEBI:57705"/>
        <dbReference type="ChEBI" id="CHEBI:58702"/>
        <dbReference type="ChEBI" id="CHEBI:68483"/>
        <dbReference type="EC" id="2.5.1.7"/>
    </reaction>
</comment>
<comment type="pathway">
    <text evidence="1">Cell wall biogenesis; peptidoglycan biosynthesis.</text>
</comment>
<comment type="subcellular location">
    <subcellularLocation>
        <location evidence="1">Cytoplasm</location>
    </subcellularLocation>
</comment>
<comment type="similarity">
    <text evidence="1">Belongs to the EPSP synthase family. MurA subfamily.</text>
</comment>
<organism>
    <name type="scientific">Listeria innocua serovar 6a (strain ATCC BAA-680 / CLIP 11262)</name>
    <dbReference type="NCBI Taxonomy" id="272626"/>
    <lineage>
        <taxon>Bacteria</taxon>
        <taxon>Bacillati</taxon>
        <taxon>Bacillota</taxon>
        <taxon>Bacilli</taxon>
        <taxon>Bacillales</taxon>
        <taxon>Listeriaceae</taxon>
        <taxon>Listeria</taxon>
    </lineage>
</organism>
<name>MURA2_LISIN</name>
<dbReference type="EC" id="2.5.1.7" evidence="1"/>
<dbReference type="EMBL" id="AL596173">
    <property type="protein sequence ID" value="CAC97923.1"/>
    <property type="molecule type" value="Genomic_DNA"/>
</dbReference>
<dbReference type="PIR" id="AC1769">
    <property type="entry name" value="AC1769"/>
</dbReference>
<dbReference type="RefSeq" id="WP_010991336.1">
    <property type="nucleotide sequence ID" value="NC_003212.1"/>
</dbReference>
<dbReference type="SMR" id="Q927U1"/>
<dbReference type="STRING" id="272626.gene:17567077"/>
<dbReference type="GeneID" id="93235961"/>
<dbReference type="KEGG" id="lin:murZ"/>
<dbReference type="eggNOG" id="COG0766">
    <property type="taxonomic scope" value="Bacteria"/>
</dbReference>
<dbReference type="HOGENOM" id="CLU_027387_0_0_9"/>
<dbReference type="OrthoDB" id="9803760at2"/>
<dbReference type="UniPathway" id="UPA00219"/>
<dbReference type="Proteomes" id="UP000002513">
    <property type="component" value="Chromosome"/>
</dbReference>
<dbReference type="GO" id="GO:0005737">
    <property type="term" value="C:cytoplasm"/>
    <property type="evidence" value="ECO:0007669"/>
    <property type="project" value="UniProtKB-SubCell"/>
</dbReference>
<dbReference type="GO" id="GO:0008760">
    <property type="term" value="F:UDP-N-acetylglucosamine 1-carboxyvinyltransferase activity"/>
    <property type="evidence" value="ECO:0007669"/>
    <property type="project" value="UniProtKB-UniRule"/>
</dbReference>
<dbReference type="GO" id="GO:0051301">
    <property type="term" value="P:cell division"/>
    <property type="evidence" value="ECO:0007669"/>
    <property type="project" value="UniProtKB-KW"/>
</dbReference>
<dbReference type="GO" id="GO:0071555">
    <property type="term" value="P:cell wall organization"/>
    <property type="evidence" value="ECO:0007669"/>
    <property type="project" value="UniProtKB-KW"/>
</dbReference>
<dbReference type="GO" id="GO:0009252">
    <property type="term" value="P:peptidoglycan biosynthetic process"/>
    <property type="evidence" value="ECO:0007669"/>
    <property type="project" value="UniProtKB-UniRule"/>
</dbReference>
<dbReference type="GO" id="GO:0008360">
    <property type="term" value="P:regulation of cell shape"/>
    <property type="evidence" value="ECO:0007669"/>
    <property type="project" value="UniProtKB-KW"/>
</dbReference>
<dbReference type="GO" id="GO:0019277">
    <property type="term" value="P:UDP-N-acetylgalactosamine biosynthetic process"/>
    <property type="evidence" value="ECO:0007669"/>
    <property type="project" value="InterPro"/>
</dbReference>
<dbReference type="CDD" id="cd01555">
    <property type="entry name" value="UdpNAET"/>
    <property type="match status" value="1"/>
</dbReference>
<dbReference type="FunFam" id="3.65.10.10:FF:000001">
    <property type="entry name" value="UDP-N-acetylglucosamine 1-carboxyvinyltransferase"/>
    <property type="match status" value="1"/>
</dbReference>
<dbReference type="Gene3D" id="3.65.10.10">
    <property type="entry name" value="Enolpyruvate transferase domain"/>
    <property type="match status" value="2"/>
</dbReference>
<dbReference type="HAMAP" id="MF_00111">
    <property type="entry name" value="MurA"/>
    <property type="match status" value="1"/>
</dbReference>
<dbReference type="InterPro" id="IPR001986">
    <property type="entry name" value="Enolpyruvate_Tfrase_dom"/>
</dbReference>
<dbReference type="InterPro" id="IPR036968">
    <property type="entry name" value="Enolpyruvate_Tfrase_sf"/>
</dbReference>
<dbReference type="InterPro" id="IPR050068">
    <property type="entry name" value="MurA_subfamily"/>
</dbReference>
<dbReference type="InterPro" id="IPR013792">
    <property type="entry name" value="RNA3'P_cycl/enolpyr_Trfase_a/b"/>
</dbReference>
<dbReference type="InterPro" id="IPR005750">
    <property type="entry name" value="UDP_GlcNAc_COvinyl_MurA"/>
</dbReference>
<dbReference type="NCBIfam" id="TIGR01072">
    <property type="entry name" value="murA"/>
    <property type="match status" value="1"/>
</dbReference>
<dbReference type="NCBIfam" id="NF006873">
    <property type="entry name" value="PRK09369.1"/>
    <property type="match status" value="1"/>
</dbReference>
<dbReference type="NCBIfam" id="NF009470">
    <property type="entry name" value="PRK12830.1"/>
    <property type="match status" value="1"/>
</dbReference>
<dbReference type="PANTHER" id="PTHR43783">
    <property type="entry name" value="UDP-N-ACETYLGLUCOSAMINE 1-CARBOXYVINYLTRANSFERASE"/>
    <property type="match status" value="1"/>
</dbReference>
<dbReference type="PANTHER" id="PTHR43783:SF2">
    <property type="entry name" value="UDP-N-ACETYLGLUCOSAMINE 1-CARBOXYVINYLTRANSFERASE 2"/>
    <property type="match status" value="1"/>
</dbReference>
<dbReference type="Pfam" id="PF00275">
    <property type="entry name" value="EPSP_synthase"/>
    <property type="match status" value="1"/>
</dbReference>
<dbReference type="SUPFAM" id="SSF55205">
    <property type="entry name" value="EPT/RTPC-like"/>
    <property type="match status" value="1"/>
</dbReference>
<accession>Q927U1</accession>
<protein>
    <recommendedName>
        <fullName evidence="1">UDP-N-acetylglucosamine 1-carboxyvinyltransferase 2</fullName>
        <ecNumber evidence="1">2.5.1.7</ecNumber>
    </recommendedName>
    <alternativeName>
        <fullName evidence="1">Enoylpyruvate transferase 2</fullName>
    </alternativeName>
    <alternativeName>
        <fullName evidence="1">UDP-N-acetylglucosamine enolpyruvyl transferase 2</fullName>
        <shortName evidence="1">EPT 2</shortName>
    </alternativeName>
</protein>
<keyword id="KW-0131">Cell cycle</keyword>
<keyword id="KW-0132">Cell division</keyword>
<keyword id="KW-0133">Cell shape</keyword>
<keyword id="KW-0961">Cell wall biogenesis/degradation</keyword>
<keyword id="KW-0963">Cytoplasm</keyword>
<keyword id="KW-0573">Peptidoglycan synthesis</keyword>
<keyword id="KW-0670">Pyruvate</keyword>
<keyword id="KW-0808">Transferase</keyword>
<evidence type="ECO:0000255" key="1">
    <source>
        <dbReference type="HAMAP-Rule" id="MF_00111"/>
    </source>
</evidence>
<gene>
    <name evidence="1" type="primary">murA2</name>
    <name type="synonym">murZ</name>
    <name type="ordered locus">lin2697</name>
</gene>
<feature type="chain" id="PRO_0000178884" description="UDP-N-acetylglucosamine 1-carboxyvinyltransferase 2">
    <location>
        <begin position="1"/>
        <end position="423"/>
    </location>
</feature>
<feature type="active site" description="Proton donor" evidence="1">
    <location>
        <position position="117"/>
    </location>
</feature>
<feature type="binding site" evidence="1">
    <location>
        <begin position="23"/>
        <end position="24"/>
    </location>
    <ligand>
        <name>phosphoenolpyruvate</name>
        <dbReference type="ChEBI" id="CHEBI:58702"/>
    </ligand>
</feature>
<feature type="binding site" evidence="1">
    <location>
        <position position="93"/>
    </location>
    <ligand>
        <name>UDP-N-acetyl-alpha-D-glucosamine</name>
        <dbReference type="ChEBI" id="CHEBI:57705"/>
    </ligand>
</feature>
<feature type="binding site" evidence="1">
    <location>
        <begin position="122"/>
        <end position="126"/>
    </location>
    <ligand>
        <name>UDP-N-acetyl-alpha-D-glucosamine</name>
        <dbReference type="ChEBI" id="CHEBI:57705"/>
    </ligand>
</feature>
<feature type="binding site" evidence="1">
    <location>
        <position position="305"/>
    </location>
    <ligand>
        <name>UDP-N-acetyl-alpha-D-glucosamine</name>
        <dbReference type="ChEBI" id="CHEBI:57705"/>
    </ligand>
</feature>
<feature type="binding site" evidence="1">
    <location>
        <position position="327"/>
    </location>
    <ligand>
        <name>UDP-N-acetyl-alpha-D-glucosamine</name>
        <dbReference type="ChEBI" id="CHEBI:57705"/>
    </ligand>
</feature>
<feature type="modified residue" description="2-(S-cysteinyl)pyruvic acid O-phosphothioketal" evidence="1">
    <location>
        <position position="117"/>
    </location>
</feature>
<reference key="1">
    <citation type="journal article" date="2001" name="Science">
        <title>Comparative genomics of Listeria species.</title>
        <authorList>
            <person name="Glaser P."/>
            <person name="Frangeul L."/>
            <person name="Buchrieser C."/>
            <person name="Rusniok C."/>
            <person name="Amend A."/>
            <person name="Baquero F."/>
            <person name="Berche P."/>
            <person name="Bloecker H."/>
            <person name="Brandt P."/>
            <person name="Chakraborty T."/>
            <person name="Charbit A."/>
            <person name="Chetouani F."/>
            <person name="Couve E."/>
            <person name="de Daruvar A."/>
            <person name="Dehoux P."/>
            <person name="Domann E."/>
            <person name="Dominguez-Bernal G."/>
            <person name="Duchaud E."/>
            <person name="Durant L."/>
            <person name="Dussurget O."/>
            <person name="Entian K.-D."/>
            <person name="Fsihi H."/>
            <person name="Garcia-del Portillo F."/>
            <person name="Garrido P."/>
            <person name="Gautier L."/>
            <person name="Goebel W."/>
            <person name="Gomez-Lopez N."/>
            <person name="Hain T."/>
            <person name="Hauf J."/>
            <person name="Jackson D."/>
            <person name="Jones L.-M."/>
            <person name="Kaerst U."/>
            <person name="Kreft J."/>
            <person name="Kuhn M."/>
            <person name="Kunst F."/>
            <person name="Kurapkat G."/>
            <person name="Madueno E."/>
            <person name="Maitournam A."/>
            <person name="Mata Vicente J."/>
            <person name="Ng E."/>
            <person name="Nedjari H."/>
            <person name="Nordsiek G."/>
            <person name="Novella S."/>
            <person name="de Pablos B."/>
            <person name="Perez-Diaz J.-C."/>
            <person name="Purcell R."/>
            <person name="Remmel B."/>
            <person name="Rose M."/>
            <person name="Schlueter T."/>
            <person name="Simoes N."/>
            <person name="Tierrez A."/>
            <person name="Vazquez-Boland J.-A."/>
            <person name="Voss H."/>
            <person name="Wehland J."/>
            <person name="Cossart P."/>
        </authorList>
    </citation>
    <scope>NUCLEOTIDE SEQUENCE [LARGE SCALE GENOMIC DNA]</scope>
    <source>
        <strain>ATCC BAA-680 / CLIP 11262</strain>
    </source>
</reference>
<proteinExistence type="inferred from homology"/>